<accession>P51748</accession>
<comment type="function">
    <text evidence="1">Cytokine that stimulates the growth and differentiation of hematopoietic precursor cells from various lineages, including granulocytes, macrophages, eosinophils and erythrocytes.</text>
</comment>
<comment type="subunit">
    <text evidence="1">Monomer. The signaling GM-CSF receptor complex is a dodecamer of two head-to-head hexamers of two alpha, two beta, and two ligand subunits (By similarity).</text>
</comment>
<comment type="subcellular location">
    <subcellularLocation>
        <location>Secreted</location>
    </subcellularLocation>
</comment>
<comment type="similarity">
    <text evidence="3">Belongs to the GM-CSF family.</text>
</comment>
<name>CSF2_CEREL</name>
<evidence type="ECO:0000250" key="1"/>
<evidence type="ECO:0000255" key="2"/>
<evidence type="ECO:0000305" key="3"/>
<keyword id="KW-0202">Cytokine</keyword>
<keyword id="KW-1015">Disulfide bond</keyword>
<keyword id="KW-0325">Glycoprotein</keyword>
<keyword id="KW-0339">Growth factor</keyword>
<keyword id="KW-0964">Secreted</keyword>
<keyword id="KW-0732">Signal</keyword>
<sequence length="144" mass="16283">MWLQNLLLLGTVVCSFSAPTRPASPVTRPWQHVDAIKEALSLLNHSSDTAAVMNETVEVVSEMFDSQEPTCLQTRLKLYKQGLRGSLTSLSGSLTMMARHYEQHCPPTQETSCETQTITFKSFKENLKDFLFIIPFDCWEPAQK</sequence>
<dbReference type="EMBL" id="U14392">
    <property type="protein sequence ID" value="AAA21439.1"/>
    <property type="molecule type" value="mRNA"/>
</dbReference>
<dbReference type="SMR" id="P51748"/>
<dbReference type="GlyCosmos" id="P51748">
    <property type="glycosylation" value="4 sites, No reported glycans"/>
</dbReference>
<dbReference type="GO" id="GO:0005615">
    <property type="term" value="C:extracellular space"/>
    <property type="evidence" value="ECO:0000250"/>
    <property type="project" value="UniProtKB"/>
</dbReference>
<dbReference type="GO" id="GO:0005125">
    <property type="term" value="F:cytokine activity"/>
    <property type="evidence" value="ECO:0000250"/>
    <property type="project" value="UniProtKB"/>
</dbReference>
<dbReference type="GO" id="GO:0005129">
    <property type="term" value="F:granulocyte macrophage colony-stimulating factor receptor binding"/>
    <property type="evidence" value="ECO:0007669"/>
    <property type="project" value="InterPro"/>
</dbReference>
<dbReference type="GO" id="GO:0008083">
    <property type="term" value="F:growth factor activity"/>
    <property type="evidence" value="ECO:0007669"/>
    <property type="project" value="UniProtKB-KW"/>
</dbReference>
<dbReference type="GO" id="GO:0006955">
    <property type="term" value="P:immune response"/>
    <property type="evidence" value="ECO:0007669"/>
    <property type="project" value="InterPro"/>
</dbReference>
<dbReference type="GO" id="GO:0030099">
    <property type="term" value="P:myeloid cell differentiation"/>
    <property type="evidence" value="ECO:0007669"/>
    <property type="project" value="TreeGrafter"/>
</dbReference>
<dbReference type="CDD" id="cd00040">
    <property type="entry name" value="CSF2"/>
    <property type="match status" value="1"/>
</dbReference>
<dbReference type="FunFam" id="1.20.1250.10:FF:000028">
    <property type="entry name" value="Granulocyte-macrophage colony-stimulating factor"/>
    <property type="match status" value="1"/>
</dbReference>
<dbReference type="Gene3D" id="1.20.1250.10">
    <property type="match status" value="1"/>
</dbReference>
<dbReference type="InterPro" id="IPR009079">
    <property type="entry name" value="4_helix_cytokine-like_core"/>
</dbReference>
<dbReference type="InterPro" id="IPR000773">
    <property type="entry name" value="GM_colony-stim-fac"/>
</dbReference>
<dbReference type="PANTHER" id="PTHR10059:SF0">
    <property type="entry name" value="GRANULOCYTE-MACROPHAGE COLONY-STIMULATING FACTOR"/>
    <property type="match status" value="1"/>
</dbReference>
<dbReference type="PANTHER" id="PTHR10059">
    <property type="entry name" value="GRANULOCYTE-MACROPHAGE COLONY-STIMULATING FACTOR GM-CSF"/>
    <property type="match status" value="1"/>
</dbReference>
<dbReference type="Pfam" id="PF01109">
    <property type="entry name" value="GM_CSF"/>
    <property type="match status" value="1"/>
</dbReference>
<dbReference type="PRINTS" id="PR00693">
    <property type="entry name" value="GMCSFACTOR"/>
</dbReference>
<dbReference type="SMART" id="SM00040">
    <property type="entry name" value="CSF2"/>
    <property type="match status" value="1"/>
</dbReference>
<dbReference type="SUPFAM" id="SSF47266">
    <property type="entry name" value="4-helical cytokines"/>
    <property type="match status" value="1"/>
</dbReference>
<dbReference type="PROSITE" id="PS00702">
    <property type="entry name" value="GM_CSF"/>
    <property type="match status" value="1"/>
</dbReference>
<organism>
    <name type="scientific">Cervus elaphus</name>
    <name type="common">Red deer</name>
    <dbReference type="NCBI Taxonomy" id="9860"/>
    <lineage>
        <taxon>Eukaryota</taxon>
        <taxon>Metazoa</taxon>
        <taxon>Chordata</taxon>
        <taxon>Craniata</taxon>
        <taxon>Vertebrata</taxon>
        <taxon>Euteleostomi</taxon>
        <taxon>Mammalia</taxon>
        <taxon>Eutheria</taxon>
        <taxon>Laurasiatheria</taxon>
        <taxon>Artiodactyla</taxon>
        <taxon>Ruminantia</taxon>
        <taxon>Pecora</taxon>
        <taxon>Cervidae</taxon>
        <taxon>Cervinae</taxon>
        <taxon>Cervus</taxon>
    </lineage>
</organism>
<gene>
    <name type="primary">CSF2</name>
</gene>
<feature type="signal peptide" evidence="1">
    <location>
        <begin position="1"/>
        <end position="17"/>
    </location>
</feature>
<feature type="chain" id="PRO_0000005863" description="Granulocyte-macrophage colony-stimulating factor">
    <location>
        <begin position="18"/>
        <end position="144"/>
    </location>
</feature>
<feature type="glycosylation site" description="O-linked (GalNAc...) serine" evidence="1">
    <location>
        <position position="24"/>
    </location>
</feature>
<feature type="glycosylation site" description="O-linked (GalNAc...) threonine" evidence="1">
    <location>
        <position position="27"/>
    </location>
</feature>
<feature type="glycosylation site" description="N-linked (GlcNAc...) asparagine" evidence="2">
    <location>
        <position position="44"/>
    </location>
</feature>
<feature type="glycosylation site" description="N-linked (GlcNAc...) asparagine" evidence="2">
    <location>
        <position position="54"/>
    </location>
</feature>
<feature type="disulfide bond" evidence="1">
    <location>
        <begin position="71"/>
        <end position="113"/>
    </location>
</feature>
<feature type="disulfide bond" evidence="1">
    <location>
        <begin position="105"/>
        <end position="138"/>
    </location>
</feature>
<proteinExistence type="evidence at transcript level"/>
<reference key="1">
    <citation type="submission" date="1994-09" db="EMBL/GenBank/DDBJ databases">
        <title>Cloning and sequencing of cervine GM-CSF.</title>
        <authorList>
            <person name="Lockhart E.A."/>
        </authorList>
    </citation>
    <scope>NUCLEOTIDE SEQUENCE [MRNA]</scope>
</reference>
<protein>
    <recommendedName>
        <fullName>Granulocyte-macrophage colony-stimulating factor</fullName>
        <shortName>GM-CSF</shortName>
    </recommendedName>
    <alternativeName>
        <fullName>Colony-stimulating factor</fullName>
        <shortName>CSF</shortName>
    </alternativeName>
</protein>